<keyword id="KW-0053">Apoptosis</keyword>
<keyword id="KW-0963">Cytoplasm</keyword>
<keyword id="KW-0378">Hydrolase</keyword>
<keyword id="KW-0539">Nucleus</keyword>
<keyword id="KW-0645">Protease</keyword>
<keyword id="KW-1185">Reference proteome</keyword>
<keyword id="KW-0788">Thiol protease</keyword>
<keyword id="KW-0865">Zymogen</keyword>
<reference key="1">
    <citation type="journal article" date="2000" name="Mol. Cell">
        <title>Identification of paracaspases and metacaspases. Two ancient families of caspase-like proteins, one of which plays a key role in MALT lymphoma.</title>
        <authorList>
            <person name="Uren A.G."/>
            <person name="O'Rourke K."/>
            <person name="Aravind L."/>
            <person name="Pisabarro M.T."/>
            <person name="Seshagiri S."/>
            <person name="Koonin E.V."/>
            <person name="Dixit V.M."/>
        </authorList>
    </citation>
    <scope>NUCLEOTIDE SEQUENCE [MRNA]</scope>
</reference>
<reference key="2">
    <citation type="journal article" date="2007" name="Can. J. Microbiol.">
        <title>Overexpression of a metacaspase gene stimulates cell growth and stress response in Schizosaccharomyces pombe.</title>
        <authorList>
            <person name="Lim H.-W."/>
            <person name="Kim S.-J."/>
            <person name="Park E.-H."/>
            <person name="Lim C.-J."/>
        </authorList>
    </citation>
    <scope>NUCLEOTIDE SEQUENCE [GENOMIC DNA]</scope>
    <scope>INDUCTION</scope>
</reference>
<reference key="3">
    <citation type="journal article" date="2002" name="Nature">
        <title>The genome sequence of Schizosaccharomyces pombe.</title>
        <authorList>
            <person name="Wood V."/>
            <person name="Gwilliam R."/>
            <person name="Rajandream M.A."/>
            <person name="Lyne M.H."/>
            <person name="Lyne R."/>
            <person name="Stewart A."/>
            <person name="Sgouros J.G."/>
            <person name="Peat N."/>
            <person name="Hayles J."/>
            <person name="Baker S.G."/>
            <person name="Basham D."/>
            <person name="Bowman S."/>
            <person name="Brooks K."/>
            <person name="Brown D."/>
            <person name="Brown S."/>
            <person name="Chillingworth T."/>
            <person name="Churcher C.M."/>
            <person name="Collins M."/>
            <person name="Connor R."/>
            <person name="Cronin A."/>
            <person name="Davis P."/>
            <person name="Feltwell T."/>
            <person name="Fraser A."/>
            <person name="Gentles S."/>
            <person name="Goble A."/>
            <person name="Hamlin N."/>
            <person name="Harris D.E."/>
            <person name="Hidalgo J."/>
            <person name="Hodgson G."/>
            <person name="Holroyd S."/>
            <person name="Hornsby T."/>
            <person name="Howarth S."/>
            <person name="Huckle E.J."/>
            <person name="Hunt S."/>
            <person name="Jagels K."/>
            <person name="James K.D."/>
            <person name="Jones L."/>
            <person name="Jones M."/>
            <person name="Leather S."/>
            <person name="McDonald S."/>
            <person name="McLean J."/>
            <person name="Mooney P."/>
            <person name="Moule S."/>
            <person name="Mungall K.L."/>
            <person name="Murphy L.D."/>
            <person name="Niblett D."/>
            <person name="Odell C."/>
            <person name="Oliver K."/>
            <person name="O'Neil S."/>
            <person name="Pearson D."/>
            <person name="Quail M.A."/>
            <person name="Rabbinowitsch E."/>
            <person name="Rutherford K.M."/>
            <person name="Rutter S."/>
            <person name="Saunders D."/>
            <person name="Seeger K."/>
            <person name="Sharp S."/>
            <person name="Skelton J."/>
            <person name="Simmonds M.N."/>
            <person name="Squares R."/>
            <person name="Squares S."/>
            <person name="Stevens K."/>
            <person name="Taylor K."/>
            <person name="Taylor R.G."/>
            <person name="Tivey A."/>
            <person name="Walsh S.V."/>
            <person name="Warren T."/>
            <person name="Whitehead S."/>
            <person name="Woodward J.R."/>
            <person name="Volckaert G."/>
            <person name="Aert R."/>
            <person name="Robben J."/>
            <person name="Grymonprez B."/>
            <person name="Weltjens I."/>
            <person name="Vanstreels E."/>
            <person name="Rieger M."/>
            <person name="Schaefer M."/>
            <person name="Mueller-Auer S."/>
            <person name="Gabel C."/>
            <person name="Fuchs M."/>
            <person name="Duesterhoeft A."/>
            <person name="Fritzc C."/>
            <person name="Holzer E."/>
            <person name="Moestl D."/>
            <person name="Hilbert H."/>
            <person name="Borzym K."/>
            <person name="Langer I."/>
            <person name="Beck A."/>
            <person name="Lehrach H."/>
            <person name="Reinhardt R."/>
            <person name="Pohl T.M."/>
            <person name="Eger P."/>
            <person name="Zimmermann W."/>
            <person name="Wedler H."/>
            <person name="Wambutt R."/>
            <person name="Purnelle B."/>
            <person name="Goffeau A."/>
            <person name="Cadieu E."/>
            <person name="Dreano S."/>
            <person name="Gloux S."/>
            <person name="Lelaure V."/>
            <person name="Mottier S."/>
            <person name="Galibert F."/>
            <person name="Aves S.J."/>
            <person name="Xiang Z."/>
            <person name="Hunt C."/>
            <person name="Moore K."/>
            <person name="Hurst S.M."/>
            <person name="Lucas M."/>
            <person name="Rochet M."/>
            <person name="Gaillardin C."/>
            <person name="Tallada V.A."/>
            <person name="Garzon A."/>
            <person name="Thode G."/>
            <person name="Daga R.R."/>
            <person name="Cruzado L."/>
            <person name="Jimenez J."/>
            <person name="Sanchez M."/>
            <person name="del Rey F."/>
            <person name="Benito J."/>
            <person name="Dominguez A."/>
            <person name="Revuelta J.L."/>
            <person name="Moreno S."/>
            <person name="Armstrong J."/>
            <person name="Forsburg S.L."/>
            <person name="Cerutti L."/>
            <person name="Lowe T."/>
            <person name="McCombie W.R."/>
            <person name="Paulsen I."/>
            <person name="Potashkin J."/>
            <person name="Shpakovski G.V."/>
            <person name="Ussery D."/>
            <person name="Barrell B.G."/>
            <person name="Nurse P."/>
        </authorList>
    </citation>
    <scope>NUCLEOTIDE SEQUENCE [LARGE SCALE GENOMIC DNA]</scope>
    <source>
        <strain>972 / ATCC 24843</strain>
    </source>
</reference>
<reference key="4">
    <citation type="journal article" date="2006" name="Nat. Biotechnol.">
        <title>ORFeome cloning and global analysis of protein localization in the fission yeast Schizosaccharomyces pombe.</title>
        <authorList>
            <person name="Matsuyama A."/>
            <person name="Arai R."/>
            <person name="Yashiroda Y."/>
            <person name="Shirai A."/>
            <person name="Kamata A."/>
            <person name="Sekido S."/>
            <person name="Kobayashi Y."/>
            <person name="Hashimoto A."/>
            <person name="Hamamoto M."/>
            <person name="Hiraoka Y."/>
            <person name="Horinouchi S."/>
            <person name="Yoshida M."/>
        </authorList>
    </citation>
    <scope>SUBCELLULAR LOCATION [LARGE SCALE ANALYSIS]</scope>
</reference>
<accession>O74477</accession>
<feature type="propeptide" id="PRO_0000333668" evidence="2">
    <location>
        <begin position="1"/>
        <end status="unknown"/>
    </location>
</feature>
<feature type="chain" id="PRO_0000310335" description="Metacaspase-1">
    <location>
        <begin status="unknown"/>
        <end position="425"/>
    </location>
</feature>
<feature type="region of interest" description="Disordered" evidence="3">
    <location>
        <begin position="1"/>
        <end position="110"/>
    </location>
</feature>
<feature type="compositionally biased region" description="Low complexity" evidence="3">
    <location>
        <begin position="13"/>
        <end position="28"/>
    </location>
</feature>
<feature type="compositionally biased region" description="Polar residues" evidence="3">
    <location>
        <begin position="29"/>
        <end position="38"/>
    </location>
</feature>
<feature type="compositionally biased region" description="Polar residues" evidence="3">
    <location>
        <begin position="88"/>
        <end position="110"/>
    </location>
</feature>
<feature type="active site" evidence="1">
    <location>
        <position position="214"/>
    </location>
</feature>
<feature type="active site" evidence="1">
    <location>
        <position position="270"/>
    </location>
</feature>
<gene>
    <name type="primary">pca1</name>
    <name type="synonym">mca1</name>
    <name type="ORF">SPCC1840.04</name>
</gene>
<protein>
    <recommendedName>
        <fullName>Metacaspase-1</fullName>
        <ecNumber>3.4.22.-</ecNumber>
    </recommendedName>
</protein>
<dbReference type="EC" id="3.4.22.-"/>
<dbReference type="EMBL" id="AF316601">
    <property type="protein sequence ID" value="AAG38593.1"/>
    <property type="molecule type" value="mRNA"/>
</dbReference>
<dbReference type="EMBL" id="DQ078253">
    <property type="protein sequence ID" value="AAY82367.1"/>
    <property type="molecule type" value="Genomic_DNA"/>
</dbReference>
<dbReference type="EMBL" id="CU329672">
    <property type="protein sequence ID" value="CAA20127.1"/>
    <property type="molecule type" value="Genomic_DNA"/>
</dbReference>
<dbReference type="PIR" id="T41172">
    <property type="entry name" value="T41172"/>
</dbReference>
<dbReference type="RefSeq" id="NP_588503.1">
    <property type="nucleotide sequence ID" value="NM_001023493.2"/>
</dbReference>
<dbReference type="SMR" id="O74477"/>
<dbReference type="BioGRID" id="275550">
    <property type="interactions" value="56"/>
</dbReference>
<dbReference type="FunCoup" id="O74477">
    <property type="interactions" value="497"/>
</dbReference>
<dbReference type="STRING" id="284812.O74477"/>
<dbReference type="MEROPS" id="C14.035"/>
<dbReference type="PaxDb" id="4896-SPCC1840.04.1"/>
<dbReference type="EnsemblFungi" id="SPCC1840.04.1">
    <property type="protein sequence ID" value="SPCC1840.04.1:pep"/>
    <property type="gene ID" value="SPCC1840.04"/>
</dbReference>
<dbReference type="GeneID" id="2538976"/>
<dbReference type="KEGG" id="spo:2538976"/>
<dbReference type="PomBase" id="SPCC1840.04">
    <property type="gene designation" value="pca1"/>
</dbReference>
<dbReference type="VEuPathDB" id="FungiDB:SPCC1840.04"/>
<dbReference type="eggNOG" id="KOG1546">
    <property type="taxonomic scope" value="Eukaryota"/>
</dbReference>
<dbReference type="HOGENOM" id="CLU_029389_1_0_1"/>
<dbReference type="InParanoid" id="O74477"/>
<dbReference type="OMA" id="MHRIMVT"/>
<dbReference type="PhylomeDB" id="O74477"/>
<dbReference type="PRO" id="PR:O74477"/>
<dbReference type="Proteomes" id="UP000002485">
    <property type="component" value="Chromosome III"/>
</dbReference>
<dbReference type="GO" id="GO:0005737">
    <property type="term" value="C:cytoplasm"/>
    <property type="evidence" value="ECO:0007005"/>
    <property type="project" value="PomBase"/>
</dbReference>
<dbReference type="GO" id="GO:0005829">
    <property type="term" value="C:cytosol"/>
    <property type="evidence" value="ECO:0007005"/>
    <property type="project" value="PomBase"/>
</dbReference>
<dbReference type="GO" id="GO:0005634">
    <property type="term" value="C:nucleus"/>
    <property type="evidence" value="ECO:0007005"/>
    <property type="project" value="PomBase"/>
</dbReference>
<dbReference type="GO" id="GO:0004197">
    <property type="term" value="F:cysteine-type endopeptidase activity"/>
    <property type="evidence" value="ECO:0000315"/>
    <property type="project" value="PomBase"/>
</dbReference>
<dbReference type="GO" id="GO:0006515">
    <property type="term" value="P:protein quality control for misfolded or incompletely synthesized proteins"/>
    <property type="evidence" value="ECO:0000266"/>
    <property type="project" value="PomBase"/>
</dbReference>
<dbReference type="GO" id="GO:0006508">
    <property type="term" value="P:proteolysis"/>
    <property type="evidence" value="ECO:0000318"/>
    <property type="project" value="GO_Central"/>
</dbReference>
<dbReference type="FunFam" id="3.40.50.12660:FF:000005">
    <property type="entry name" value="Mca1p"/>
    <property type="match status" value="1"/>
</dbReference>
<dbReference type="Gene3D" id="3.40.50.12660">
    <property type="match status" value="2"/>
</dbReference>
<dbReference type="InterPro" id="IPR029030">
    <property type="entry name" value="Caspase-like_dom_sf"/>
</dbReference>
<dbReference type="InterPro" id="IPR050452">
    <property type="entry name" value="Metacaspase"/>
</dbReference>
<dbReference type="InterPro" id="IPR011600">
    <property type="entry name" value="Pept_C14_caspase"/>
</dbReference>
<dbReference type="PANTHER" id="PTHR48104:SF30">
    <property type="entry name" value="METACASPASE-1"/>
    <property type="match status" value="1"/>
</dbReference>
<dbReference type="PANTHER" id="PTHR48104">
    <property type="entry name" value="METACASPASE-4"/>
    <property type="match status" value="1"/>
</dbReference>
<dbReference type="Pfam" id="PF00656">
    <property type="entry name" value="Peptidase_C14"/>
    <property type="match status" value="1"/>
</dbReference>
<dbReference type="SUPFAM" id="SSF52129">
    <property type="entry name" value="Caspase-like"/>
    <property type="match status" value="1"/>
</dbReference>
<sequence>MSYNSNPYNGGQYPPYNTYTRPNYSPNNGSQSNNTVHQYQPPRMPPPSTRPQTDGNSNQIPMENVGHISLSSANSHAYAPPSGPPPNTGANSYGNPNYSGPQLPNTQTQSYNLAGGGNFQYQYSTCQGKRKALLIGINYLNTQNELQGCINDVMSMSQLLIQRYGYKQEDMVIMTDTASNQRAIPTRQNMLDAMRWLVSDAQPNDALFFHYSGHGGQTKDLDGDEVDGYDETIYPLDHQYAGQIIDDEMHEIMVKPLPAGCRLTALFDSCHSGGALDLPFTYSTKGVLKEPNMLKESGMDVLHAGLSYASGDIMGAINNVKNIFTSATNGFNNNALQYSRQVKFSPADVISLSGCKDNQTSADTSVNGFATGALSYAFREVVTQNPQLSYLQLLRGIRQVLSNKYSQLPQLSCSHPLDMNLAMVL</sequence>
<evidence type="ECO:0000250" key="1"/>
<evidence type="ECO:0000255" key="2"/>
<evidence type="ECO:0000256" key="3">
    <source>
        <dbReference type="SAM" id="MobiDB-lite"/>
    </source>
</evidence>
<evidence type="ECO:0000269" key="4">
    <source>
    </source>
</evidence>
<evidence type="ECO:0000269" key="5">
    <source>
    </source>
</evidence>
<evidence type="ECO:0000305" key="6"/>
<comment type="function">
    <text evidence="1">Involved in cell death (apoptosis).</text>
</comment>
<comment type="subcellular location">
    <subcellularLocation>
        <location evidence="4">Cytoplasm</location>
    </subcellularLocation>
    <subcellularLocation>
        <location evidence="4">Nucleus</location>
    </subcellularLocation>
</comment>
<comment type="induction">
    <text evidence="5">Induced by stress-inducing agents such as H(2)O(2), sodium nitroprusside and cadmium chloride.</text>
</comment>
<comment type="similarity">
    <text evidence="6">Belongs to the peptidase C14B family.</text>
</comment>
<proteinExistence type="evidence at transcript level"/>
<organism>
    <name type="scientific">Schizosaccharomyces pombe (strain 972 / ATCC 24843)</name>
    <name type="common">Fission yeast</name>
    <dbReference type="NCBI Taxonomy" id="284812"/>
    <lineage>
        <taxon>Eukaryota</taxon>
        <taxon>Fungi</taxon>
        <taxon>Dikarya</taxon>
        <taxon>Ascomycota</taxon>
        <taxon>Taphrinomycotina</taxon>
        <taxon>Schizosaccharomycetes</taxon>
        <taxon>Schizosaccharomycetales</taxon>
        <taxon>Schizosaccharomycetaceae</taxon>
        <taxon>Schizosaccharomyces</taxon>
    </lineage>
</organism>
<name>MCA1_SCHPO</name>